<sequence>MSRSGKSLTKYKIVFLGEQGVGKTSLITRFMYDTFDDHYQATIGIDFLSKTMYLDDKTIRLQLWDTAGQERFRSLIPSYIRDSRVAIIVYDITKRKSFEYIDKWIEDVKNERGDENVILCIVGNKSDLSDERQISTEEGEKKAKLLGAKIFMETSTKAGYNVKALFKKIAKSLPEFQNSESTPLDSENANSANQNKPGVIDISTAEEQEQSACQC</sequence>
<keyword id="KW-0002">3D-structure</keyword>
<keyword id="KW-1003">Cell membrane</keyword>
<keyword id="KW-0342">GTP-binding</keyword>
<keyword id="KW-0449">Lipoprotein</keyword>
<keyword id="KW-0472">Membrane</keyword>
<keyword id="KW-0488">Methylation</keyword>
<keyword id="KW-0547">Nucleotide-binding</keyword>
<keyword id="KW-0636">Prenylation</keyword>
<keyword id="KW-0653">Protein transport</keyword>
<keyword id="KW-1185">Reference proteome</keyword>
<keyword id="KW-0813">Transport</keyword>
<dbReference type="EMBL" id="X59598">
    <property type="protein sequence ID" value="CAA42166.1"/>
    <property type="molecule type" value="Genomic_DNA"/>
</dbReference>
<dbReference type="EMBL" id="U17244">
    <property type="protein sequence ID" value="AAB67381.1"/>
    <property type="molecule type" value="Genomic_DNA"/>
</dbReference>
<dbReference type="EMBL" id="AY557936">
    <property type="protein sequence ID" value="AAS56262.1"/>
    <property type="molecule type" value="Genomic_DNA"/>
</dbReference>
<dbReference type="EMBL" id="BK006945">
    <property type="protein sequence ID" value="DAA09574.1"/>
    <property type="molecule type" value="Genomic_DNA"/>
</dbReference>
<dbReference type="PIR" id="S51399">
    <property type="entry name" value="S51399"/>
</dbReference>
<dbReference type="RefSeq" id="NP_013363.1">
    <property type="nucleotide sequence ID" value="NM_001182149.1"/>
</dbReference>
<dbReference type="PDB" id="9AYR">
    <property type="method" value="EM"/>
    <property type="resolution" value="3.30 A"/>
    <property type="chains" value="C=1-215"/>
</dbReference>
<dbReference type="PDBsum" id="9AYR"/>
<dbReference type="EMDB" id="EMD-43997"/>
<dbReference type="SMR" id="Q99260"/>
<dbReference type="BioGRID" id="31529">
    <property type="interactions" value="941"/>
</dbReference>
<dbReference type="DIP" id="DIP-5577N"/>
<dbReference type="FunCoup" id="Q99260">
    <property type="interactions" value="657"/>
</dbReference>
<dbReference type="IntAct" id="Q99260">
    <property type="interactions" value="25"/>
</dbReference>
<dbReference type="MINT" id="Q99260"/>
<dbReference type="STRING" id="4932.YLR262C"/>
<dbReference type="iPTMnet" id="Q99260"/>
<dbReference type="PaxDb" id="4932-YLR262C"/>
<dbReference type="PeptideAtlas" id="Q99260"/>
<dbReference type="EnsemblFungi" id="YLR262C_mRNA">
    <property type="protein sequence ID" value="YLR262C"/>
    <property type="gene ID" value="YLR262C"/>
</dbReference>
<dbReference type="GeneID" id="850966"/>
<dbReference type="KEGG" id="sce:YLR262C"/>
<dbReference type="AGR" id="SGD:S000004252"/>
<dbReference type="SGD" id="S000004252">
    <property type="gene designation" value="YPT6"/>
</dbReference>
<dbReference type="VEuPathDB" id="FungiDB:YLR262C"/>
<dbReference type="eggNOG" id="KOG0094">
    <property type="taxonomic scope" value="Eukaryota"/>
</dbReference>
<dbReference type="HOGENOM" id="CLU_041217_10_2_1"/>
<dbReference type="InParanoid" id="Q99260"/>
<dbReference type="OMA" id="NCFFRET"/>
<dbReference type="OrthoDB" id="9989112at2759"/>
<dbReference type="BioCyc" id="YEAST:G3O-32362-MONOMER"/>
<dbReference type="Reactome" id="R-SCE-6798695">
    <property type="pathway name" value="Neutrophil degranulation"/>
</dbReference>
<dbReference type="Reactome" id="R-SCE-6811440">
    <property type="pathway name" value="Retrograde transport at the Trans-Golgi-Network"/>
</dbReference>
<dbReference type="Reactome" id="R-SCE-8873719">
    <property type="pathway name" value="RAB geranylgeranylation"/>
</dbReference>
<dbReference type="Reactome" id="R-SCE-8876198">
    <property type="pathway name" value="RAB GEFs exchange GTP for GDP on RABs"/>
</dbReference>
<dbReference type="BioGRID-ORCS" id="850966">
    <property type="hits" value="0 hits in 10 CRISPR screens"/>
</dbReference>
<dbReference type="PRO" id="PR:Q99260"/>
<dbReference type="Proteomes" id="UP000002311">
    <property type="component" value="Chromosome XII"/>
</dbReference>
<dbReference type="RNAct" id="Q99260">
    <property type="molecule type" value="protein"/>
</dbReference>
<dbReference type="GO" id="GO:0005801">
    <property type="term" value="C:cis-Golgi network"/>
    <property type="evidence" value="ECO:0000314"/>
    <property type="project" value="SGD"/>
</dbReference>
<dbReference type="GO" id="GO:0005829">
    <property type="term" value="C:cytosol"/>
    <property type="evidence" value="ECO:0000314"/>
    <property type="project" value="SGD"/>
</dbReference>
<dbReference type="GO" id="GO:0012505">
    <property type="term" value="C:endomembrane system"/>
    <property type="evidence" value="ECO:0000318"/>
    <property type="project" value="GO_Central"/>
</dbReference>
<dbReference type="GO" id="GO:0005794">
    <property type="term" value="C:Golgi apparatus"/>
    <property type="evidence" value="ECO:0000314"/>
    <property type="project" value="SGD"/>
</dbReference>
<dbReference type="GO" id="GO:0000407">
    <property type="term" value="C:phagophore assembly site"/>
    <property type="evidence" value="ECO:0000315"/>
    <property type="project" value="SGD"/>
</dbReference>
<dbReference type="GO" id="GO:0005886">
    <property type="term" value="C:plasma membrane"/>
    <property type="evidence" value="ECO:0007669"/>
    <property type="project" value="UniProtKB-SubCell"/>
</dbReference>
<dbReference type="GO" id="GO:0005525">
    <property type="term" value="F:GTP binding"/>
    <property type="evidence" value="ECO:0007669"/>
    <property type="project" value="UniProtKB-KW"/>
</dbReference>
<dbReference type="GO" id="GO:0003924">
    <property type="term" value="F:GTPase activity"/>
    <property type="evidence" value="ECO:0000314"/>
    <property type="project" value="SGD"/>
</dbReference>
<dbReference type="GO" id="GO:0034605">
    <property type="term" value="P:cellular response to heat"/>
    <property type="evidence" value="ECO:0000315"/>
    <property type="project" value="SGD"/>
</dbReference>
<dbReference type="GO" id="GO:0006995">
    <property type="term" value="P:cellular response to nitrogen starvation"/>
    <property type="evidence" value="ECO:0000315"/>
    <property type="project" value="SGD"/>
</dbReference>
<dbReference type="GO" id="GO:0032258">
    <property type="term" value="P:cytoplasm to vacuole targeting by the Cvt pathway"/>
    <property type="evidence" value="ECO:0000315"/>
    <property type="project" value="SGD"/>
</dbReference>
<dbReference type="GO" id="GO:0006895">
    <property type="term" value="P:Golgi to endosome transport"/>
    <property type="evidence" value="ECO:0000315"/>
    <property type="project" value="SGD"/>
</dbReference>
<dbReference type="GO" id="GO:0006891">
    <property type="term" value="P:intra-Golgi vesicle-mediated transport"/>
    <property type="evidence" value="ECO:0000318"/>
    <property type="project" value="GO_Central"/>
</dbReference>
<dbReference type="GO" id="GO:0006886">
    <property type="term" value="P:intracellular protein transport"/>
    <property type="evidence" value="ECO:0000318"/>
    <property type="project" value="GO_Central"/>
</dbReference>
<dbReference type="GO" id="GO:0016236">
    <property type="term" value="P:macroautophagy"/>
    <property type="evidence" value="ECO:0000315"/>
    <property type="project" value="SGD"/>
</dbReference>
<dbReference type="GO" id="GO:0034497">
    <property type="term" value="P:protein localization to phagophore assembly site"/>
    <property type="evidence" value="ECO:0000315"/>
    <property type="project" value="SGD"/>
</dbReference>
<dbReference type="GO" id="GO:0031503">
    <property type="term" value="P:protein-containing complex localization"/>
    <property type="evidence" value="ECO:0000315"/>
    <property type="project" value="SGD"/>
</dbReference>
<dbReference type="GO" id="GO:0042147">
    <property type="term" value="P:retrograde transport, endosome to Golgi"/>
    <property type="evidence" value="ECO:0000315"/>
    <property type="project" value="SGD"/>
</dbReference>
<dbReference type="GO" id="GO:0000301">
    <property type="term" value="P:retrograde transport, vesicle recycling within Golgi"/>
    <property type="evidence" value="ECO:0000315"/>
    <property type="project" value="SGD"/>
</dbReference>
<dbReference type="GO" id="GO:0006890">
    <property type="term" value="P:retrograde vesicle-mediated transport, Golgi to endoplasmic reticulum"/>
    <property type="evidence" value="ECO:0000315"/>
    <property type="project" value="SGD"/>
</dbReference>
<dbReference type="CDD" id="cd01861">
    <property type="entry name" value="Rab6"/>
    <property type="match status" value="1"/>
</dbReference>
<dbReference type="FunFam" id="3.40.50.300:FF:000970">
    <property type="entry name" value="Ras-related protein Rab-6"/>
    <property type="match status" value="1"/>
</dbReference>
<dbReference type="Gene3D" id="3.40.50.300">
    <property type="entry name" value="P-loop containing nucleotide triphosphate hydrolases"/>
    <property type="match status" value="1"/>
</dbReference>
<dbReference type="InterPro" id="IPR027417">
    <property type="entry name" value="P-loop_NTPase"/>
</dbReference>
<dbReference type="InterPro" id="IPR050227">
    <property type="entry name" value="Rab"/>
</dbReference>
<dbReference type="InterPro" id="IPR005225">
    <property type="entry name" value="Small_GTP-bd"/>
</dbReference>
<dbReference type="InterPro" id="IPR001806">
    <property type="entry name" value="Small_GTPase"/>
</dbReference>
<dbReference type="NCBIfam" id="TIGR00231">
    <property type="entry name" value="small_GTP"/>
    <property type="match status" value="1"/>
</dbReference>
<dbReference type="PANTHER" id="PTHR47977">
    <property type="entry name" value="RAS-RELATED PROTEIN RAB"/>
    <property type="match status" value="1"/>
</dbReference>
<dbReference type="Pfam" id="PF00071">
    <property type="entry name" value="Ras"/>
    <property type="match status" value="1"/>
</dbReference>
<dbReference type="PRINTS" id="PR00449">
    <property type="entry name" value="RASTRNSFRMNG"/>
</dbReference>
<dbReference type="SMART" id="SM00175">
    <property type="entry name" value="RAB"/>
    <property type="match status" value="1"/>
</dbReference>
<dbReference type="SMART" id="SM00176">
    <property type="entry name" value="RAN"/>
    <property type="match status" value="1"/>
</dbReference>
<dbReference type="SMART" id="SM00173">
    <property type="entry name" value="RAS"/>
    <property type="match status" value="1"/>
</dbReference>
<dbReference type="SMART" id="SM00174">
    <property type="entry name" value="RHO"/>
    <property type="match status" value="1"/>
</dbReference>
<dbReference type="SUPFAM" id="SSF52540">
    <property type="entry name" value="P-loop containing nucleoside triphosphate hydrolases"/>
    <property type="match status" value="1"/>
</dbReference>
<dbReference type="PROSITE" id="PS51419">
    <property type="entry name" value="RAB"/>
    <property type="match status" value="1"/>
</dbReference>
<gene>
    <name type="primary">YPT6</name>
    <name type="ordered locus">YLR262C</name>
    <name type="ORF">L8479.11</name>
</gene>
<reference key="1">
    <citation type="submission" date="1995-07" db="EMBL/GenBank/DDBJ databases">
        <authorList>
            <person name="Hengst L."/>
            <person name="Gallwitz D."/>
        </authorList>
    </citation>
    <scope>NUCLEOTIDE SEQUENCE [GENOMIC DNA]</scope>
    <source>
        <strain>AG430</strain>
    </source>
</reference>
<reference key="2">
    <citation type="journal article" date="1997" name="Nature">
        <title>The nucleotide sequence of Saccharomyces cerevisiae chromosome XII.</title>
        <authorList>
            <person name="Johnston M."/>
            <person name="Hillier L.W."/>
            <person name="Riles L."/>
            <person name="Albermann K."/>
            <person name="Andre B."/>
            <person name="Ansorge W."/>
            <person name="Benes V."/>
            <person name="Brueckner M."/>
            <person name="Delius H."/>
            <person name="Dubois E."/>
            <person name="Duesterhoeft A."/>
            <person name="Entian K.-D."/>
            <person name="Floeth M."/>
            <person name="Goffeau A."/>
            <person name="Hebling U."/>
            <person name="Heumann K."/>
            <person name="Heuss-Neitzel D."/>
            <person name="Hilbert H."/>
            <person name="Hilger F."/>
            <person name="Kleine K."/>
            <person name="Koetter P."/>
            <person name="Louis E.J."/>
            <person name="Messenguy F."/>
            <person name="Mewes H.-W."/>
            <person name="Miosga T."/>
            <person name="Moestl D."/>
            <person name="Mueller-Auer S."/>
            <person name="Nentwich U."/>
            <person name="Obermaier B."/>
            <person name="Piravandi E."/>
            <person name="Pohl T.M."/>
            <person name="Portetelle D."/>
            <person name="Purnelle B."/>
            <person name="Rechmann S."/>
            <person name="Rieger M."/>
            <person name="Rinke M."/>
            <person name="Rose M."/>
            <person name="Scharfe M."/>
            <person name="Scherens B."/>
            <person name="Scholler P."/>
            <person name="Schwager C."/>
            <person name="Schwarz S."/>
            <person name="Underwood A.P."/>
            <person name="Urrestarazu L.A."/>
            <person name="Vandenbol M."/>
            <person name="Verhasselt P."/>
            <person name="Vierendeels F."/>
            <person name="Voet M."/>
            <person name="Volckaert G."/>
            <person name="Voss H."/>
            <person name="Wambutt R."/>
            <person name="Wedler E."/>
            <person name="Wedler H."/>
            <person name="Zimmermann F.K."/>
            <person name="Zollner A."/>
            <person name="Hani J."/>
            <person name="Hoheisel J.D."/>
        </authorList>
    </citation>
    <scope>NUCLEOTIDE SEQUENCE [LARGE SCALE GENOMIC DNA]</scope>
    <source>
        <strain>ATCC 204508 / S288c</strain>
    </source>
</reference>
<reference key="3">
    <citation type="journal article" date="2014" name="G3 (Bethesda)">
        <title>The reference genome sequence of Saccharomyces cerevisiae: Then and now.</title>
        <authorList>
            <person name="Engel S.R."/>
            <person name="Dietrich F.S."/>
            <person name="Fisk D.G."/>
            <person name="Binkley G."/>
            <person name="Balakrishnan R."/>
            <person name="Costanzo M.C."/>
            <person name="Dwight S.S."/>
            <person name="Hitz B.C."/>
            <person name="Karra K."/>
            <person name="Nash R.S."/>
            <person name="Weng S."/>
            <person name="Wong E.D."/>
            <person name="Lloyd P."/>
            <person name="Skrzypek M.S."/>
            <person name="Miyasato S.R."/>
            <person name="Simison M."/>
            <person name="Cherry J.M."/>
        </authorList>
    </citation>
    <scope>GENOME REANNOTATION</scope>
    <source>
        <strain>ATCC 204508 / S288c</strain>
    </source>
</reference>
<reference key="4">
    <citation type="journal article" date="2007" name="Genome Res.">
        <title>Approaching a complete repository of sequence-verified protein-encoding clones for Saccharomyces cerevisiae.</title>
        <authorList>
            <person name="Hu Y."/>
            <person name="Rolfs A."/>
            <person name="Bhullar B."/>
            <person name="Murthy T.V.S."/>
            <person name="Zhu C."/>
            <person name="Berger M.F."/>
            <person name="Camargo A.A."/>
            <person name="Kelley F."/>
            <person name="McCarron S."/>
            <person name="Jepson D."/>
            <person name="Richardson A."/>
            <person name="Raphael J."/>
            <person name="Moreira D."/>
            <person name="Taycher E."/>
            <person name="Zuo D."/>
            <person name="Mohr S."/>
            <person name="Kane M.F."/>
            <person name="Williamson J."/>
            <person name="Simpson A.J.G."/>
            <person name="Bulyk M.L."/>
            <person name="Harlow E."/>
            <person name="Marsischky G."/>
            <person name="Kolodner R.D."/>
            <person name="LaBaer J."/>
        </authorList>
    </citation>
    <scope>NUCLEOTIDE SEQUENCE [GENOMIC DNA]</scope>
    <source>
        <strain>ATCC 204508 / S288c</strain>
    </source>
</reference>
<reference key="5">
    <citation type="journal article" date="2002" name="Biochem. Biophys. Res. Commun.">
        <title>Saccharomyces cerevisiae Pra1p/Yip3p interacts with Yip1p and Rab proteins.</title>
        <authorList>
            <person name="Calero M."/>
            <person name="Collins R.N."/>
        </authorList>
    </citation>
    <scope>INTERACTION WITH YIP3</scope>
</reference>
<reference key="6">
    <citation type="journal article" date="2002" name="FEBS Lett.">
        <title>Identification of the novel proteins Yip4p and Yip5p as Rab GTPase interacting factors.</title>
        <authorList>
            <person name="Calero M."/>
            <person name="Winand N.J."/>
            <person name="Collins R.N."/>
        </authorList>
    </citation>
    <scope>INTERACTION WITH YIF1 AND YIP4</scope>
</reference>
<reference key="7">
    <citation type="journal article" date="2003" name="Nature">
        <title>Global analysis of protein expression in yeast.</title>
        <authorList>
            <person name="Ghaemmaghami S."/>
            <person name="Huh W.-K."/>
            <person name="Bower K."/>
            <person name="Howson R.W."/>
            <person name="Belle A."/>
            <person name="Dephoure N."/>
            <person name="O'Shea E.K."/>
            <person name="Weissman J.S."/>
        </authorList>
    </citation>
    <scope>LEVEL OF PROTEIN EXPRESSION [LARGE SCALE ANALYSIS]</scope>
</reference>
<organism>
    <name type="scientific">Saccharomyces cerevisiae (strain ATCC 204508 / S288c)</name>
    <name type="common">Baker's yeast</name>
    <dbReference type="NCBI Taxonomy" id="559292"/>
    <lineage>
        <taxon>Eukaryota</taxon>
        <taxon>Fungi</taxon>
        <taxon>Dikarya</taxon>
        <taxon>Ascomycota</taxon>
        <taxon>Saccharomycotina</taxon>
        <taxon>Saccharomycetes</taxon>
        <taxon>Saccharomycetales</taxon>
        <taxon>Saccharomycetaceae</taxon>
        <taxon>Saccharomyces</taxon>
    </lineage>
</organism>
<proteinExistence type="evidence at protein level"/>
<evidence type="ECO:0000250" key="1"/>
<evidence type="ECO:0000256" key="2">
    <source>
        <dbReference type="SAM" id="MobiDB-lite"/>
    </source>
</evidence>
<evidence type="ECO:0000269" key="3">
    <source>
    </source>
</evidence>
<evidence type="ECO:0000269" key="4">
    <source>
    </source>
</evidence>
<evidence type="ECO:0000269" key="5">
    <source>
    </source>
</evidence>
<evidence type="ECO:0000305" key="6"/>
<evidence type="ECO:0007829" key="7">
    <source>
        <dbReference type="PDB" id="9AYR"/>
    </source>
</evidence>
<comment type="function">
    <text>Protein transport. Might participate in post-Golgi transport.</text>
</comment>
<comment type="subunit">
    <text evidence="3 4">Interacts with YIF1, YIP3 and YIP4.</text>
</comment>
<comment type="interaction">
    <interactant intactId="EBI-29503">
        <id>Q99260</id>
    </interactant>
    <interactant intactId="EBI-7517">
        <id>P39958</id>
        <label>GDI1</label>
    </interactant>
    <organismsDiffer>false</organismsDiffer>
    <experiments>6</experiments>
</comment>
<comment type="interaction">
    <interactant intactId="EBI-29503">
        <id>Q99260</id>
    </interactant>
    <interactant intactId="EBI-15183">
        <id>P40395</id>
        <label>RIC1</label>
    </interactant>
    <organismsDiffer>false</organismsDiffer>
    <experiments>3</experiments>
</comment>
<comment type="interaction">
    <interactant intactId="EBI-29503">
        <id>Q99260</id>
    </interactant>
    <interactant intactId="EBI-25301">
        <id>P53633</id>
        <label>YIP3</label>
    </interactant>
    <organismsDiffer>false</organismsDiffer>
    <experiments>2</experiments>
</comment>
<comment type="interaction">
    <interactant intactId="EBI-29503">
        <id>Q99260</id>
    </interactant>
    <interactant intactId="EBI-24124">
        <id>P53093</id>
        <label>YIP4</label>
    </interactant>
    <organismsDiffer>false</organismsDiffer>
    <experiments>2</experiments>
</comment>
<comment type="subcellular location">
    <subcellularLocation>
        <location evidence="6">Cell membrane</location>
        <topology evidence="6">Lipid-anchor</topology>
        <orientation evidence="6">Cytoplasmic side</orientation>
    </subcellularLocation>
</comment>
<comment type="miscellaneous">
    <text evidence="5">Present with 7720 molecules/cell in log phase SD medium.</text>
</comment>
<comment type="similarity">
    <text evidence="6">Belongs to the small GTPase superfamily. Rab family.</text>
</comment>
<accession>Q99260</accession>
<accession>D6VYQ8</accession>
<feature type="chain" id="PRO_0000121319" description="GTP-binding protein YPT6">
    <location>
        <begin position="1"/>
        <end position="215"/>
    </location>
</feature>
<feature type="region of interest" description="Disordered" evidence="2">
    <location>
        <begin position="178"/>
        <end position="215"/>
    </location>
</feature>
<feature type="short sequence motif" description="Effector region" evidence="6">
    <location>
        <begin position="39"/>
        <end position="47"/>
    </location>
</feature>
<feature type="compositionally biased region" description="Polar residues" evidence="2">
    <location>
        <begin position="178"/>
        <end position="196"/>
    </location>
</feature>
<feature type="binding site" evidence="1">
    <location>
        <begin position="17"/>
        <end position="24"/>
    </location>
    <ligand>
        <name>GTP</name>
        <dbReference type="ChEBI" id="CHEBI:37565"/>
    </ligand>
</feature>
<feature type="binding site" evidence="1">
    <location>
        <begin position="65"/>
        <end position="69"/>
    </location>
    <ligand>
        <name>GTP</name>
        <dbReference type="ChEBI" id="CHEBI:37565"/>
    </ligand>
</feature>
<feature type="binding site" evidence="1">
    <location>
        <begin position="124"/>
        <end position="127"/>
    </location>
    <ligand>
        <name>GTP</name>
        <dbReference type="ChEBI" id="CHEBI:37565"/>
    </ligand>
</feature>
<feature type="modified residue" description="Cysteine methyl ester" evidence="1">
    <location>
        <position position="215"/>
    </location>
</feature>
<feature type="lipid moiety-binding region" description="S-geranylgeranyl cysteine" evidence="1">
    <location>
        <position position="213"/>
    </location>
</feature>
<feature type="lipid moiety-binding region" description="S-geranylgeranyl cysteine" evidence="1">
    <location>
        <position position="215"/>
    </location>
</feature>
<feature type="strand" evidence="7">
    <location>
        <begin position="10"/>
        <end position="14"/>
    </location>
</feature>
<feature type="helix" evidence="7">
    <location>
        <begin position="25"/>
        <end position="30"/>
    </location>
</feature>
<feature type="strand" evidence="7">
    <location>
        <begin position="31"/>
        <end position="33"/>
    </location>
</feature>
<feature type="strand" evidence="7">
    <location>
        <begin position="48"/>
        <end position="54"/>
    </location>
</feature>
<feature type="strand" evidence="7">
    <location>
        <begin position="57"/>
        <end position="63"/>
    </location>
</feature>
<feature type="helix" evidence="7">
    <location>
        <begin position="76"/>
        <end position="82"/>
    </location>
</feature>
<feature type="strand" evidence="7">
    <location>
        <begin position="84"/>
        <end position="91"/>
    </location>
</feature>
<feature type="helix" evidence="7">
    <location>
        <begin position="95"/>
        <end position="99"/>
    </location>
</feature>
<feature type="helix" evidence="7">
    <location>
        <begin position="101"/>
        <end position="110"/>
    </location>
</feature>
<feature type="strand" evidence="7">
    <location>
        <begin position="120"/>
        <end position="124"/>
    </location>
</feature>
<feature type="helix" evidence="7">
    <location>
        <begin position="136"/>
        <end position="146"/>
    </location>
</feature>
<feature type="strand" evidence="7">
    <location>
        <begin position="149"/>
        <end position="153"/>
    </location>
</feature>
<feature type="turn" evidence="7">
    <location>
        <begin position="156"/>
        <end position="158"/>
    </location>
</feature>
<feature type="helix" evidence="7">
    <location>
        <begin position="162"/>
        <end position="172"/>
    </location>
</feature>
<feature type="strand" evidence="7">
    <location>
        <begin position="198"/>
        <end position="200"/>
    </location>
</feature>
<protein>
    <recommendedName>
        <fullName>GTP-binding protein YPT6</fullName>
    </recommendedName>
</protein>
<name>YPT6_YEAST</name>